<comment type="function">
    <text evidence="1">Catalyzes the hydrolysis of complex carboxylic polyesters found in the cell wall of plants (By similarity). Degrades cutin, a macromolecule that forms the structure of the plant cuticle (By similarity). Allows pathogenic fungi to penetrate through the cuticular barrier into the host plant during the initial stage of fungal infection (By similarity).</text>
</comment>
<comment type="catalytic activity">
    <reaction evidence="4">
        <text>cutin + H2O = cutin monomers.</text>
        <dbReference type="EC" id="3.1.1.74"/>
    </reaction>
</comment>
<comment type="subcellular location">
    <subcellularLocation>
        <location evidence="2">Secreted</location>
    </subcellularLocation>
</comment>
<comment type="PTM">
    <text evidence="2">The 2 disulfide bonds play a critical role in holding the catalytic residues in juxta-position; reduction of the disulfide bridges results in the complete inactivation of the enzyme.</text>
</comment>
<comment type="similarity">
    <text evidence="5">Belongs to the cutinase family.</text>
</comment>
<name>CUTI_BLUHO</name>
<protein>
    <recommendedName>
        <fullName>Cutinase</fullName>
        <ecNumber evidence="4">3.1.1.74</ecNumber>
    </recommendedName>
    <alternativeName>
        <fullName>Cutin hydrolase</fullName>
    </alternativeName>
</protein>
<sequence length="236" mass="24604">MSLTLFSFLSLVSILCIVTAAPVTNVNFTSIQVSSMQHIAAINKASFFSPTALPANATENGLTGSCKPIILIFAKGTGENGNVGDGSSPGPAWFSELRNAIGEDKIAVQGVQYEADVFGYLVGGDPEGSQNYLTITNQAVTQCPNSKIVIGGYSQGAQITHNAAQLYSPLVTSRIAAVVLFGDPYTDKPVGQVSPSSVLEICHDGDIICTGSGGPDPHLTYSKNATCAAKFVLDRI</sequence>
<gene>
    <name type="primary">CUT1</name>
</gene>
<dbReference type="EC" id="3.1.1.74" evidence="4"/>
<dbReference type="EMBL" id="AF326784">
    <property type="protein sequence ID" value="AAL67672.1"/>
    <property type="molecule type" value="Genomic_DNA"/>
</dbReference>
<dbReference type="SMR" id="Q8X1P1"/>
<dbReference type="ESTHER" id="blugr-CUT1">
    <property type="family name" value="Cutinase"/>
</dbReference>
<dbReference type="VEuPathDB" id="FungiDB:BLGHR1_14259"/>
<dbReference type="GO" id="GO:0005576">
    <property type="term" value="C:extracellular region"/>
    <property type="evidence" value="ECO:0007669"/>
    <property type="project" value="UniProtKB-SubCell"/>
</dbReference>
<dbReference type="GO" id="GO:0050525">
    <property type="term" value="F:cutinase activity"/>
    <property type="evidence" value="ECO:0000250"/>
    <property type="project" value="UniProtKB"/>
</dbReference>
<dbReference type="GO" id="GO:0016052">
    <property type="term" value="P:carbohydrate catabolic process"/>
    <property type="evidence" value="ECO:0007669"/>
    <property type="project" value="TreeGrafter"/>
</dbReference>
<dbReference type="Gene3D" id="3.40.50.1820">
    <property type="entry name" value="alpha/beta hydrolase"/>
    <property type="match status" value="1"/>
</dbReference>
<dbReference type="InterPro" id="IPR029058">
    <property type="entry name" value="AB_hydrolase_fold"/>
</dbReference>
<dbReference type="InterPro" id="IPR000675">
    <property type="entry name" value="Cutinase/axe"/>
</dbReference>
<dbReference type="InterPro" id="IPR043580">
    <property type="entry name" value="CUTINASE_1"/>
</dbReference>
<dbReference type="InterPro" id="IPR011150">
    <property type="entry name" value="Cutinase_monf"/>
</dbReference>
<dbReference type="PANTHER" id="PTHR48250:SF2">
    <property type="entry name" value="CUTINASE"/>
    <property type="match status" value="1"/>
</dbReference>
<dbReference type="PANTHER" id="PTHR48250">
    <property type="entry name" value="CUTINASE 2-RELATED"/>
    <property type="match status" value="1"/>
</dbReference>
<dbReference type="Pfam" id="PF01083">
    <property type="entry name" value="Cutinase"/>
    <property type="match status" value="1"/>
</dbReference>
<dbReference type="PRINTS" id="PR00129">
    <property type="entry name" value="CUTINASE"/>
</dbReference>
<dbReference type="SMART" id="SM01110">
    <property type="entry name" value="Cutinase"/>
    <property type="match status" value="1"/>
</dbReference>
<dbReference type="SUPFAM" id="SSF53474">
    <property type="entry name" value="alpha/beta-Hydrolases"/>
    <property type="match status" value="1"/>
</dbReference>
<dbReference type="PROSITE" id="PS00155">
    <property type="entry name" value="CUTINASE_1"/>
    <property type="match status" value="1"/>
</dbReference>
<proteinExistence type="inferred from homology"/>
<evidence type="ECO:0000250" key="1">
    <source>
        <dbReference type="UniProtKB" id="P00590"/>
    </source>
</evidence>
<evidence type="ECO:0000250" key="2">
    <source>
        <dbReference type="UniProtKB" id="P11373"/>
    </source>
</evidence>
<evidence type="ECO:0000255" key="3"/>
<evidence type="ECO:0000255" key="4">
    <source>
        <dbReference type="PROSITE-ProRule" id="PRU10108"/>
    </source>
</evidence>
<evidence type="ECO:0000305" key="5"/>
<feature type="signal peptide" evidence="3">
    <location>
        <begin position="1"/>
        <end position="20"/>
    </location>
</feature>
<feature type="chain" id="PRO_0000006438" description="Cutinase">
    <location>
        <begin position="21"/>
        <end position="236"/>
    </location>
</feature>
<feature type="active site" description="Nucleophile" evidence="4">
    <location>
        <position position="154"/>
    </location>
</feature>
<feature type="active site" evidence="4">
    <location>
        <position position="206"/>
    </location>
</feature>
<feature type="active site" description="Proton donor/acceptor" evidence="4">
    <location>
        <position position="218"/>
    </location>
</feature>
<feature type="site" description="Transition state stabilizer" evidence="1">
    <location>
        <position position="155"/>
    </location>
</feature>
<feature type="disulfide bond" evidence="1">
    <location>
        <begin position="66"/>
        <end position="143"/>
    </location>
</feature>
<feature type="disulfide bond" evidence="1">
    <location>
        <begin position="202"/>
        <end position="209"/>
    </location>
</feature>
<keyword id="KW-1015">Disulfide bond</keyword>
<keyword id="KW-0378">Hydrolase</keyword>
<keyword id="KW-0964">Secreted</keyword>
<keyword id="KW-0719">Serine esterase</keyword>
<keyword id="KW-0732">Signal</keyword>
<keyword id="KW-0843">Virulence</keyword>
<organism>
    <name type="scientific">Blumeria hordei</name>
    <name type="common">Barley powdery mildew</name>
    <name type="synonym">Blumeria graminis f. sp. hordei</name>
    <dbReference type="NCBI Taxonomy" id="2867405"/>
    <lineage>
        <taxon>Eukaryota</taxon>
        <taxon>Fungi</taxon>
        <taxon>Dikarya</taxon>
        <taxon>Ascomycota</taxon>
        <taxon>Pezizomycotina</taxon>
        <taxon>Leotiomycetes</taxon>
        <taxon>Erysiphales</taxon>
        <taxon>Erysiphaceae</taxon>
        <taxon>Blumeria</taxon>
    </lineage>
</organism>
<accession>Q8X1P1</accession>
<reference key="1">
    <citation type="submission" date="2000-12" db="EMBL/GenBank/DDBJ databases">
        <title>Cutinase gene isolation and functional analysis from Blumeria graminis during the barley/powdery mildew interactions.</title>
        <authorList>
            <person name="Zhang Z."/>
            <person name="Perfect E."/>
            <person name="Gurr S.J."/>
        </authorList>
    </citation>
    <scope>NUCLEOTIDE SEQUENCE [GENOMIC DNA]</scope>
</reference>